<sequence>MLSSILKKIQPSLLVNFRIITRTYATKEVTVRDAINSALDEELARDEKVFIMGEEVAQYNGAYKITKGLFDKYGGDRIIDTPITEAGFAGIGVGAAMAGTRPIIEFMTFNFAMQAIDHIINSSAKTHYMSGGKVFNPIVWRGPNGPPTAVGAQHSQCFAAWYGSVPGLKVVAPWSAADHRGLLKSAIRDDNPVVYLESELLYNYKFDLSDQEQDKEYLVPIGKAKVEREGKDVTIVGFSRIVSNCMEAAEILAKEGISAEVINLRTIRPIDAETIVNSLKKTNKLVTVEEGWAQSGIGAEISALMMEHAFDYLDAPIERICGADVPMPYASNLENAAMVQTQNIVNAAKRVTQRNK</sequence>
<protein>
    <recommendedName>
        <fullName>Pyruvate dehydrogenase E1 component subunit beta, mitochondrial</fullName>
        <shortName>PDHE1-B</shortName>
        <ecNumber>1.2.4.1</ecNumber>
    </recommendedName>
</protein>
<dbReference type="EC" id="1.2.4.1"/>
<dbReference type="EMBL" id="AAFI02000015">
    <property type="protein sequence ID" value="EAL69162.1"/>
    <property type="molecule type" value="Genomic_DNA"/>
</dbReference>
<dbReference type="RefSeq" id="XP_643119.1">
    <property type="nucleotide sequence ID" value="XM_638027.1"/>
</dbReference>
<dbReference type="SMR" id="Q86HX0"/>
<dbReference type="FunCoup" id="Q86HX0">
    <property type="interactions" value="612"/>
</dbReference>
<dbReference type="STRING" id="44689.Q86HX0"/>
<dbReference type="PaxDb" id="44689-DDB0229442"/>
<dbReference type="EnsemblProtists" id="EAL69162">
    <property type="protein sequence ID" value="EAL69162"/>
    <property type="gene ID" value="DDB_G0276417"/>
</dbReference>
<dbReference type="GeneID" id="8620524"/>
<dbReference type="KEGG" id="ddi:DDB_G0276417"/>
<dbReference type="dictyBase" id="DDB_G0276417">
    <property type="gene designation" value="pdhB"/>
</dbReference>
<dbReference type="VEuPathDB" id="AmoebaDB:DDB_G0276417"/>
<dbReference type="eggNOG" id="KOG0524">
    <property type="taxonomic scope" value="Eukaryota"/>
</dbReference>
<dbReference type="HOGENOM" id="CLU_012907_1_1_1"/>
<dbReference type="InParanoid" id="Q86HX0"/>
<dbReference type="OMA" id="WYANCPG"/>
<dbReference type="PhylomeDB" id="Q86HX0"/>
<dbReference type="Reactome" id="R-DDI-9837999">
    <property type="pathway name" value="Mitochondrial protein degradation"/>
</dbReference>
<dbReference type="Reactome" id="R-DDI-9861559">
    <property type="pathway name" value="PDH complex synthesizes acetyl-CoA from PYR"/>
</dbReference>
<dbReference type="PRO" id="PR:Q86HX0"/>
<dbReference type="Proteomes" id="UP000002195">
    <property type="component" value="Chromosome 2"/>
</dbReference>
<dbReference type="GO" id="GO:0005759">
    <property type="term" value="C:mitochondrial matrix"/>
    <property type="evidence" value="ECO:0007669"/>
    <property type="project" value="UniProtKB-SubCell"/>
</dbReference>
<dbReference type="GO" id="GO:0045254">
    <property type="term" value="C:pyruvate dehydrogenase complex"/>
    <property type="evidence" value="ECO:0000250"/>
    <property type="project" value="dictyBase"/>
</dbReference>
<dbReference type="GO" id="GO:0046872">
    <property type="term" value="F:metal ion binding"/>
    <property type="evidence" value="ECO:0007669"/>
    <property type="project" value="UniProtKB-KW"/>
</dbReference>
<dbReference type="GO" id="GO:0004739">
    <property type="term" value="F:pyruvate dehydrogenase (acetyl-transferring) activity"/>
    <property type="evidence" value="ECO:0000250"/>
    <property type="project" value="dictyBase"/>
</dbReference>
<dbReference type="GO" id="GO:0006086">
    <property type="term" value="P:pyruvate decarboxylation to acetyl-CoA"/>
    <property type="evidence" value="ECO:0000250"/>
    <property type="project" value="dictyBase"/>
</dbReference>
<dbReference type="CDD" id="cd07036">
    <property type="entry name" value="TPP_PYR_E1-PDHc-beta_like"/>
    <property type="match status" value="1"/>
</dbReference>
<dbReference type="FunFam" id="3.40.50.920:FF:000001">
    <property type="entry name" value="Pyruvate dehydrogenase E1 beta subunit"/>
    <property type="match status" value="1"/>
</dbReference>
<dbReference type="FunFam" id="3.40.50.970:FF:000006">
    <property type="entry name" value="Pyruvate dehydrogenase E1 component subunit beta"/>
    <property type="match status" value="1"/>
</dbReference>
<dbReference type="Gene3D" id="3.40.50.920">
    <property type="match status" value="1"/>
</dbReference>
<dbReference type="Gene3D" id="3.40.50.970">
    <property type="match status" value="1"/>
</dbReference>
<dbReference type="InterPro" id="IPR027110">
    <property type="entry name" value="PDHB_mito-type"/>
</dbReference>
<dbReference type="InterPro" id="IPR029061">
    <property type="entry name" value="THDP-binding"/>
</dbReference>
<dbReference type="InterPro" id="IPR009014">
    <property type="entry name" value="Transketo_C/PFOR_II"/>
</dbReference>
<dbReference type="InterPro" id="IPR005475">
    <property type="entry name" value="Transketolase-like_Pyr-bd"/>
</dbReference>
<dbReference type="InterPro" id="IPR033248">
    <property type="entry name" value="Transketolase_C"/>
</dbReference>
<dbReference type="NCBIfam" id="NF006667">
    <property type="entry name" value="PRK09212.1"/>
    <property type="match status" value="1"/>
</dbReference>
<dbReference type="NCBIfam" id="NF008854">
    <property type="entry name" value="PRK11892.1"/>
    <property type="match status" value="1"/>
</dbReference>
<dbReference type="PANTHER" id="PTHR11624">
    <property type="entry name" value="DEHYDROGENASE RELATED"/>
    <property type="match status" value="1"/>
</dbReference>
<dbReference type="PANTHER" id="PTHR11624:SF96">
    <property type="entry name" value="PYRUVATE DEHYDROGENASE E1 COMPONENT SUBUNIT BETA, MITOCHONDRIAL"/>
    <property type="match status" value="1"/>
</dbReference>
<dbReference type="Pfam" id="PF02779">
    <property type="entry name" value="Transket_pyr"/>
    <property type="match status" value="1"/>
</dbReference>
<dbReference type="Pfam" id="PF02780">
    <property type="entry name" value="Transketolase_C"/>
    <property type="match status" value="1"/>
</dbReference>
<dbReference type="SMART" id="SM00861">
    <property type="entry name" value="Transket_pyr"/>
    <property type="match status" value="1"/>
</dbReference>
<dbReference type="SUPFAM" id="SSF52518">
    <property type="entry name" value="Thiamin diphosphate-binding fold (THDP-binding)"/>
    <property type="match status" value="1"/>
</dbReference>
<dbReference type="SUPFAM" id="SSF52922">
    <property type="entry name" value="TK C-terminal domain-like"/>
    <property type="match status" value="1"/>
</dbReference>
<gene>
    <name type="primary">pdhB</name>
    <name type="ORF">DDB_G0276417</name>
</gene>
<name>ODPB_DICDI</name>
<reference key="1">
    <citation type="journal article" date="2002" name="Nature">
        <title>Sequence and analysis of chromosome 2 of Dictyostelium discoideum.</title>
        <authorList>
            <person name="Gloeckner G."/>
            <person name="Eichinger L."/>
            <person name="Szafranski K."/>
            <person name="Pachebat J.A."/>
            <person name="Bankier A.T."/>
            <person name="Dear P.H."/>
            <person name="Lehmann R."/>
            <person name="Baumgart C."/>
            <person name="Parra G."/>
            <person name="Abril J.F."/>
            <person name="Guigo R."/>
            <person name="Kumpf K."/>
            <person name="Tunggal B."/>
            <person name="Cox E.C."/>
            <person name="Quail M.A."/>
            <person name="Platzer M."/>
            <person name="Rosenthal A."/>
            <person name="Noegel A.A."/>
        </authorList>
    </citation>
    <scope>NUCLEOTIDE SEQUENCE [LARGE SCALE GENOMIC DNA]</scope>
    <source>
        <strain>AX4</strain>
    </source>
</reference>
<reference key="2">
    <citation type="journal article" date="2005" name="Nature">
        <title>The genome of the social amoeba Dictyostelium discoideum.</title>
        <authorList>
            <person name="Eichinger L."/>
            <person name="Pachebat J.A."/>
            <person name="Gloeckner G."/>
            <person name="Rajandream M.A."/>
            <person name="Sucgang R."/>
            <person name="Berriman M."/>
            <person name="Song J."/>
            <person name="Olsen R."/>
            <person name="Szafranski K."/>
            <person name="Xu Q."/>
            <person name="Tunggal B."/>
            <person name="Kummerfeld S."/>
            <person name="Madera M."/>
            <person name="Konfortov B.A."/>
            <person name="Rivero F."/>
            <person name="Bankier A.T."/>
            <person name="Lehmann R."/>
            <person name="Hamlin N."/>
            <person name="Davies R."/>
            <person name="Gaudet P."/>
            <person name="Fey P."/>
            <person name="Pilcher K."/>
            <person name="Chen G."/>
            <person name="Saunders D."/>
            <person name="Sodergren E.J."/>
            <person name="Davis P."/>
            <person name="Kerhornou A."/>
            <person name="Nie X."/>
            <person name="Hall N."/>
            <person name="Anjard C."/>
            <person name="Hemphill L."/>
            <person name="Bason N."/>
            <person name="Farbrother P."/>
            <person name="Desany B."/>
            <person name="Just E."/>
            <person name="Morio T."/>
            <person name="Rost R."/>
            <person name="Churcher C.M."/>
            <person name="Cooper J."/>
            <person name="Haydock S."/>
            <person name="van Driessche N."/>
            <person name="Cronin A."/>
            <person name="Goodhead I."/>
            <person name="Muzny D.M."/>
            <person name="Mourier T."/>
            <person name="Pain A."/>
            <person name="Lu M."/>
            <person name="Harper D."/>
            <person name="Lindsay R."/>
            <person name="Hauser H."/>
            <person name="James K.D."/>
            <person name="Quiles M."/>
            <person name="Madan Babu M."/>
            <person name="Saito T."/>
            <person name="Buchrieser C."/>
            <person name="Wardroper A."/>
            <person name="Felder M."/>
            <person name="Thangavelu M."/>
            <person name="Johnson D."/>
            <person name="Knights A."/>
            <person name="Loulseged H."/>
            <person name="Mungall K.L."/>
            <person name="Oliver K."/>
            <person name="Price C."/>
            <person name="Quail M.A."/>
            <person name="Urushihara H."/>
            <person name="Hernandez J."/>
            <person name="Rabbinowitsch E."/>
            <person name="Steffen D."/>
            <person name="Sanders M."/>
            <person name="Ma J."/>
            <person name="Kohara Y."/>
            <person name="Sharp S."/>
            <person name="Simmonds M.N."/>
            <person name="Spiegler S."/>
            <person name="Tivey A."/>
            <person name="Sugano S."/>
            <person name="White B."/>
            <person name="Walker D."/>
            <person name="Woodward J.R."/>
            <person name="Winckler T."/>
            <person name="Tanaka Y."/>
            <person name="Shaulsky G."/>
            <person name="Schleicher M."/>
            <person name="Weinstock G.M."/>
            <person name="Rosenthal A."/>
            <person name="Cox E.C."/>
            <person name="Chisholm R.L."/>
            <person name="Gibbs R.A."/>
            <person name="Loomis W.F."/>
            <person name="Platzer M."/>
            <person name="Kay R.R."/>
            <person name="Williams J.G."/>
            <person name="Dear P.H."/>
            <person name="Noegel A.A."/>
            <person name="Barrell B.G."/>
            <person name="Kuspa A."/>
        </authorList>
    </citation>
    <scope>NUCLEOTIDE SEQUENCE [LARGE SCALE GENOMIC DNA]</scope>
    <source>
        <strain>AX4</strain>
    </source>
</reference>
<reference key="3">
    <citation type="submission" date="2009-07" db="UniProtKB">
        <authorList>
            <person name="Bienvenut W.V."/>
            <person name="Ura S."/>
            <person name="Insall R.H."/>
        </authorList>
    </citation>
    <scope>PROTEIN SEQUENCE OF 134-141; 229-240 AND 255-281</scope>
    <scope>IDENTIFICATION BY MASS SPECTROMETRY</scope>
    <source>
        <strain>AX2</strain>
    </source>
</reference>
<comment type="function">
    <text evidence="1">The pyruvate dehydrogenase complex catalyzes the overall conversion of pyruvate to acetyl-CoA and CO(2). It contains multiple copies of three enzymatic components: pyruvate dehydrogenase (E1), dihydrolipoamide acetyltransferase (E2) and lipoamide dehydrogenase (E3) (By similarity).</text>
</comment>
<comment type="catalytic activity">
    <reaction>
        <text>N(6)-[(R)-lipoyl]-L-lysyl-[protein] + pyruvate + H(+) = N(6)-[(R)-S(8)-acetyldihydrolipoyl]-L-lysyl-[protein] + CO2</text>
        <dbReference type="Rhea" id="RHEA:19189"/>
        <dbReference type="Rhea" id="RHEA-COMP:10474"/>
        <dbReference type="Rhea" id="RHEA-COMP:10478"/>
        <dbReference type="ChEBI" id="CHEBI:15361"/>
        <dbReference type="ChEBI" id="CHEBI:15378"/>
        <dbReference type="ChEBI" id="CHEBI:16526"/>
        <dbReference type="ChEBI" id="CHEBI:83099"/>
        <dbReference type="ChEBI" id="CHEBI:83111"/>
        <dbReference type="EC" id="1.2.4.1"/>
    </reaction>
</comment>
<comment type="cofactor">
    <cofactor evidence="2">
        <name>thiamine diphosphate</name>
        <dbReference type="ChEBI" id="CHEBI:58937"/>
    </cofactor>
</comment>
<comment type="subunit">
    <text evidence="1">Tetramer of 2 alpha and 2 beta subunits.</text>
</comment>
<comment type="subcellular location">
    <subcellularLocation>
        <location>Mitochondrion matrix</location>
    </subcellularLocation>
</comment>
<keyword id="KW-0903">Direct protein sequencing</keyword>
<keyword id="KW-0479">Metal-binding</keyword>
<keyword id="KW-0496">Mitochondrion</keyword>
<keyword id="KW-0560">Oxidoreductase</keyword>
<keyword id="KW-0630">Potassium</keyword>
<keyword id="KW-0670">Pyruvate</keyword>
<keyword id="KW-1185">Reference proteome</keyword>
<keyword id="KW-0786">Thiamine pyrophosphate</keyword>
<keyword id="KW-0809">Transit peptide</keyword>
<evidence type="ECO:0000250" key="1"/>
<evidence type="ECO:0000250" key="2">
    <source>
        <dbReference type="UniProtKB" id="P11177"/>
    </source>
</evidence>
<evidence type="ECO:0000255" key="3"/>
<accession>Q86HX0</accession>
<accession>Q551L1</accession>
<feature type="transit peptide" description="Mitochondrion" evidence="3">
    <location>
        <begin position="1"/>
        <end position="25"/>
    </location>
</feature>
<feature type="chain" id="PRO_0000328626" description="Pyruvate dehydrogenase E1 component subunit beta, mitochondrial">
    <location>
        <begin position="26"/>
        <end position="356"/>
    </location>
</feature>
<feature type="binding site" evidence="2">
    <location>
        <position position="85"/>
    </location>
    <ligand>
        <name>thiamine diphosphate</name>
        <dbReference type="ChEBI" id="CHEBI:58937"/>
        <note>ligand shared with alpha subunit</note>
    </ligand>
</feature>
<feature type="binding site" evidence="2">
    <location>
        <position position="138"/>
    </location>
    <ligand>
        <name>K(+)</name>
        <dbReference type="ChEBI" id="CHEBI:29103"/>
        <note>structural</note>
    </ligand>
</feature>
<feature type="binding site" evidence="2">
    <location>
        <position position="186"/>
    </location>
    <ligand>
        <name>K(+)</name>
        <dbReference type="ChEBI" id="CHEBI:29103"/>
        <note>structural</note>
    </ligand>
</feature>
<feature type="binding site" evidence="2">
    <location>
        <position position="187"/>
    </location>
    <ligand>
        <name>K(+)</name>
        <dbReference type="ChEBI" id="CHEBI:29103"/>
        <note>structural</note>
    </ligand>
</feature>
<feature type="binding site" evidence="2">
    <location>
        <position position="189"/>
    </location>
    <ligand>
        <name>K(+)</name>
        <dbReference type="ChEBI" id="CHEBI:29103"/>
        <note>structural</note>
    </ligand>
</feature>
<feature type="binding site" evidence="2">
    <location>
        <position position="191"/>
    </location>
    <ligand>
        <name>K(+)</name>
        <dbReference type="ChEBI" id="CHEBI:29103"/>
        <note>structural</note>
    </ligand>
</feature>
<organism>
    <name type="scientific">Dictyostelium discoideum</name>
    <name type="common">Social amoeba</name>
    <dbReference type="NCBI Taxonomy" id="44689"/>
    <lineage>
        <taxon>Eukaryota</taxon>
        <taxon>Amoebozoa</taxon>
        <taxon>Evosea</taxon>
        <taxon>Eumycetozoa</taxon>
        <taxon>Dictyostelia</taxon>
        <taxon>Dictyosteliales</taxon>
        <taxon>Dictyosteliaceae</taxon>
        <taxon>Dictyostelium</taxon>
    </lineage>
</organism>
<proteinExistence type="evidence at protein level"/>